<protein>
    <recommendedName>
        <fullName evidence="1">LexA repressor</fullName>
        <ecNumber evidence="1">3.4.21.88</ecNumber>
    </recommendedName>
</protein>
<dbReference type="EC" id="3.4.21.88" evidence="1"/>
<dbReference type="EMBL" id="CP000821">
    <property type="protein sequence ID" value="ABV34813.1"/>
    <property type="molecule type" value="Genomic_DNA"/>
</dbReference>
<dbReference type="RefSeq" id="WP_012004339.1">
    <property type="nucleotide sequence ID" value="NC_009831.1"/>
</dbReference>
<dbReference type="SMR" id="A8FPP0"/>
<dbReference type="STRING" id="425104.Ssed_0200"/>
<dbReference type="MEROPS" id="S24.001"/>
<dbReference type="KEGG" id="sse:Ssed_0200"/>
<dbReference type="eggNOG" id="COG1974">
    <property type="taxonomic scope" value="Bacteria"/>
</dbReference>
<dbReference type="HOGENOM" id="CLU_066192_45_3_6"/>
<dbReference type="OrthoDB" id="9802364at2"/>
<dbReference type="Proteomes" id="UP000002015">
    <property type="component" value="Chromosome"/>
</dbReference>
<dbReference type="GO" id="GO:0003677">
    <property type="term" value="F:DNA binding"/>
    <property type="evidence" value="ECO:0007669"/>
    <property type="project" value="UniProtKB-UniRule"/>
</dbReference>
<dbReference type="GO" id="GO:0004252">
    <property type="term" value="F:serine-type endopeptidase activity"/>
    <property type="evidence" value="ECO:0007669"/>
    <property type="project" value="UniProtKB-UniRule"/>
</dbReference>
<dbReference type="GO" id="GO:0006281">
    <property type="term" value="P:DNA repair"/>
    <property type="evidence" value="ECO:0007669"/>
    <property type="project" value="UniProtKB-UniRule"/>
</dbReference>
<dbReference type="GO" id="GO:0006260">
    <property type="term" value="P:DNA replication"/>
    <property type="evidence" value="ECO:0007669"/>
    <property type="project" value="UniProtKB-UniRule"/>
</dbReference>
<dbReference type="GO" id="GO:0045892">
    <property type="term" value="P:negative regulation of DNA-templated transcription"/>
    <property type="evidence" value="ECO:0007669"/>
    <property type="project" value="UniProtKB-UniRule"/>
</dbReference>
<dbReference type="GO" id="GO:0006508">
    <property type="term" value="P:proteolysis"/>
    <property type="evidence" value="ECO:0007669"/>
    <property type="project" value="InterPro"/>
</dbReference>
<dbReference type="GO" id="GO:0009432">
    <property type="term" value="P:SOS response"/>
    <property type="evidence" value="ECO:0007669"/>
    <property type="project" value="UniProtKB-UniRule"/>
</dbReference>
<dbReference type="CDD" id="cd06529">
    <property type="entry name" value="S24_LexA-like"/>
    <property type="match status" value="1"/>
</dbReference>
<dbReference type="FunFam" id="1.10.10.10:FF:000009">
    <property type="entry name" value="LexA repressor"/>
    <property type="match status" value="1"/>
</dbReference>
<dbReference type="FunFam" id="2.10.109.10:FF:000001">
    <property type="entry name" value="LexA repressor"/>
    <property type="match status" value="1"/>
</dbReference>
<dbReference type="Gene3D" id="2.10.109.10">
    <property type="entry name" value="Umud Fragment, subunit A"/>
    <property type="match status" value="1"/>
</dbReference>
<dbReference type="Gene3D" id="1.10.10.10">
    <property type="entry name" value="Winged helix-like DNA-binding domain superfamily/Winged helix DNA-binding domain"/>
    <property type="match status" value="1"/>
</dbReference>
<dbReference type="HAMAP" id="MF_00015">
    <property type="entry name" value="LexA"/>
    <property type="match status" value="1"/>
</dbReference>
<dbReference type="InterPro" id="IPR006200">
    <property type="entry name" value="LexA"/>
</dbReference>
<dbReference type="InterPro" id="IPR039418">
    <property type="entry name" value="LexA-like"/>
</dbReference>
<dbReference type="InterPro" id="IPR036286">
    <property type="entry name" value="LexA/Signal_pep-like_sf"/>
</dbReference>
<dbReference type="InterPro" id="IPR006199">
    <property type="entry name" value="LexA_DNA-bd_dom"/>
</dbReference>
<dbReference type="InterPro" id="IPR050077">
    <property type="entry name" value="LexA_repressor"/>
</dbReference>
<dbReference type="InterPro" id="IPR006197">
    <property type="entry name" value="Peptidase_S24_LexA"/>
</dbReference>
<dbReference type="InterPro" id="IPR015927">
    <property type="entry name" value="Peptidase_S24_S26A/B/C"/>
</dbReference>
<dbReference type="InterPro" id="IPR036388">
    <property type="entry name" value="WH-like_DNA-bd_sf"/>
</dbReference>
<dbReference type="InterPro" id="IPR036390">
    <property type="entry name" value="WH_DNA-bd_sf"/>
</dbReference>
<dbReference type="NCBIfam" id="TIGR00498">
    <property type="entry name" value="lexA"/>
    <property type="match status" value="1"/>
</dbReference>
<dbReference type="PANTHER" id="PTHR33516">
    <property type="entry name" value="LEXA REPRESSOR"/>
    <property type="match status" value="1"/>
</dbReference>
<dbReference type="PANTHER" id="PTHR33516:SF2">
    <property type="entry name" value="LEXA REPRESSOR-RELATED"/>
    <property type="match status" value="1"/>
</dbReference>
<dbReference type="Pfam" id="PF01726">
    <property type="entry name" value="LexA_DNA_bind"/>
    <property type="match status" value="1"/>
</dbReference>
<dbReference type="Pfam" id="PF00717">
    <property type="entry name" value="Peptidase_S24"/>
    <property type="match status" value="1"/>
</dbReference>
<dbReference type="PRINTS" id="PR00726">
    <property type="entry name" value="LEXASERPTASE"/>
</dbReference>
<dbReference type="SUPFAM" id="SSF51306">
    <property type="entry name" value="LexA/Signal peptidase"/>
    <property type="match status" value="1"/>
</dbReference>
<dbReference type="SUPFAM" id="SSF46785">
    <property type="entry name" value="Winged helix' DNA-binding domain"/>
    <property type="match status" value="1"/>
</dbReference>
<gene>
    <name evidence="1" type="primary">lexA</name>
    <name type="ordered locus">Ssed_0200</name>
</gene>
<comment type="function">
    <text evidence="1">Represses a number of genes involved in the response to DNA damage (SOS response), including recA and lexA. In the presence of single-stranded DNA, RecA interacts with LexA causing an autocatalytic cleavage which disrupts the DNA-binding part of LexA, leading to derepression of the SOS regulon and eventually DNA repair.</text>
</comment>
<comment type="catalytic activity">
    <reaction evidence="1">
        <text>Hydrolysis of Ala-|-Gly bond in repressor LexA.</text>
        <dbReference type="EC" id="3.4.21.88"/>
    </reaction>
</comment>
<comment type="subunit">
    <text evidence="1">Homodimer.</text>
</comment>
<comment type="similarity">
    <text evidence="1">Belongs to the peptidase S24 family.</text>
</comment>
<reference key="1">
    <citation type="submission" date="2007-08" db="EMBL/GenBank/DDBJ databases">
        <title>Complete sequence of Shewanella sediminis HAW-EB3.</title>
        <authorList>
            <consortium name="US DOE Joint Genome Institute"/>
            <person name="Copeland A."/>
            <person name="Lucas S."/>
            <person name="Lapidus A."/>
            <person name="Barry K."/>
            <person name="Glavina del Rio T."/>
            <person name="Dalin E."/>
            <person name="Tice H."/>
            <person name="Pitluck S."/>
            <person name="Chertkov O."/>
            <person name="Brettin T."/>
            <person name="Bruce D."/>
            <person name="Detter J.C."/>
            <person name="Han C."/>
            <person name="Schmutz J."/>
            <person name="Larimer F."/>
            <person name="Land M."/>
            <person name="Hauser L."/>
            <person name="Kyrpides N."/>
            <person name="Kim E."/>
            <person name="Zhao J.-S."/>
            <person name="Richardson P."/>
        </authorList>
    </citation>
    <scope>NUCLEOTIDE SEQUENCE [LARGE SCALE GENOMIC DNA]</scope>
    <source>
        <strain>HAW-EB3</strain>
    </source>
</reference>
<accession>A8FPP0</accession>
<name>LEXA_SHESH</name>
<sequence length="206" mass="22636">MRPLTPRQAEILELIKRNIADTGMPPTRAEIAKRLGFKSANAAEEHLKALAKKGCIEIIPGTSRGIRLTQANESEEELGLPLIGQVAAGEPILAQEHVEQHYQIDPAMFRPSADFLLRVRGDSMKNIGILEGDLLAVHKAEQARNGQVVVARVEDDVTVKRFEKKGSIVYLHAENEDYSPIVVDLTSESLSIEGLAVGVIRNGDWQ</sequence>
<proteinExistence type="inferred from homology"/>
<keyword id="KW-0068">Autocatalytic cleavage</keyword>
<keyword id="KW-0227">DNA damage</keyword>
<keyword id="KW-0234">DNA repair</keyword>
<keyword id="KW-0235">DNA replication</keyword>
<keyword id="KW-0238">DNA-binding</keyword>
<keyword id="KW-0378">Hydrolase</keyword>
<keyword id="KW-1185">Reference proteome</keyword>
<keyword id="KW-0678">Repressor</keyword>
<keyword id="KW-0742">SOS response</keyword>
<keyword id="KW-0804">Transcription</keyword>
<keyword id="KW-0805">Transcription regulation</keyword>
<feature type="chain" id="PRO_1000074067" description="LexA repressor">
    <location>
        <begin position="1"/>
        <end position="206"/>
    </location>
</feature>
<feature type="DNA-binding region" description="H-T-H motif" evidence="1">
    <location>
        <begin position="28"/>
        <end position="48"/>
    </location>
</feature>
<feature type="active site" description="For autocatalytic cleavage activity" evidence="1">
    <location>
        <position position="123"/>
    </location>
</feature>
<feature type="active site" description="For autocatalytic cleavage activity" evidence="1">
    <location>
        <position position="160"/>
    </location>
</feature>
<feature type="site" description="Cleavage; by autolysis" evidence="1">
    <location>
        <begin position="88"/>
        <end position="89"/>
    </location>
</feature>
<organism>
    <name type="scientific">Shewanella sediminis (strain HAW-EB3)</name>
    <dbReference type="NCBI Taxonomy" id="425104"/>
    <lineage>
        <taxon>Bacteria</taxon>
        <taxon>Pseudomonadati</taxon>
        <taxon>Pseudomonadota</taxon>
        <taxon>Gammaproteobacteria</taxon>
        <taxon>Alteromonadales</taxon>
        <taxon>Shewanellaceae</taxon>
        <taxon>Shewanella</taxon>
    </lineage>
</organism>
<evidence type="ECO:0000255" key="1">
    <source>
        <dbReference type="HAMAP-Rule" id="MF_00015"/>
    </source>
</evidence>